<keyword id="KW-0929">Antimicrobial</keyword>
<keyword id="KW-0081">Bacteriolytic enzyme</keyword>
<keyword id="KW-0326">Glycosidase</keyword>
<keyword id="KW-0378">Hydrolase</keyword>
<keyword id="KW-1185">Reference proteome</keyword>
<keyword id="KW-0964">Secreted</keyword>
<keyword id="KW-0732">Signal</keyword>
<reference key="1">
    <citation type="journal article" date="2002" name="Nature">
        <title>Sequence and analysis of chromosome 2 of Dictyostelium discoideum.</title>
        <authorList>
            <person name="Gloeckner G."/>
            <person name="Eichinger L."/>
            <person name="Szafranski K."/>
            <person name="Pachebat J.A."/>
            <person name="Bankier A.T."/>
            <person name="Dear P.H."/>
            <person name="Lehmann R."/>
            <person name="Baumgart C."/>
            <person name="Parra G."/>
            <person name="Abril J.F."/>
            <person name="Guigo R."/>
            <person name="Kumpf K."/>
            <person name="Tunggal B."/>
            <person name="Cox E.C."/>
            <person name="Quail M.A."/>
            <person name="Platzer M."/>
            <person name="Rosenthal A."/>
            <person name="Noegel A.A."/>
        </authorList>
    </citation>
    <scope>NUCLEOTIDE SEQUENCE [LARGE SCALE GENOMIC DNA]</scope>
    <source>
        <strain>AX4</strain>
    </source>
</reference>
<reference key="2">
    <citation type="journal article" date="2005" name="Nature">
        <title>The genome of the social amoeba Dictyostelium discoideum.</title>
        <authorList>
            <person name="Eichinger L."/>
            <person name="Pachebat J.A."/>
            <person name="Gloeckner G."/>
            <person name="Rajandream M.A."/>
            <person name="Sucgang R."/>
            <person name="Berriman M."/>
            <person name="Song J."/>
            <person name="Olsen R."/>
            <person name="Szafranski K."/>
            <person name="Xu Q."/>
            <person name="Tunggal B."/>
            <person name="Kummerfeld S."/>
            <person name="Madera M."/>
            <person name="Konfortov B.A."/>
            <person name="Rivero F."/>
            <person name="Bankier A.T."/>
            <person name="Lehmann R."/>
            <person name="Hamlin N."/>
            <person name="Davies R."/>
            <person name="Gaudet P."/>
            <person name="Fey P."/>
            <person name="Pilcher K."/>
            <person name="Chen G."/>
            <person name="Saunders D."/>
            <person name="Sodergren E.J."/>
            <person name="Davis P."/>
            <person name="Kerhornou A."/>
            <person name="Nie X."/>
            <person name="Hall N."/>
            <person name="Anjard C."/>
            <person name="Hemphill L."/>
            <person name="Bason N."/>
            <person name="Farbrother P."/>
            <person name="Desany B."/>
            <person name="Just E."/>
            <person name="Morio T."/>
            <person name="Rost R."/>
            <person name="Churcher C.M."/>
            <person name="Cooper J."/>
            <person name="Haydock S."/>
            <person name="van Driessche N."/>
            <person name="Cronin A."/>
            <person name="Goodhead I."/>
            <person name="Muzny D.M."/>
            <person name="Mourier T."/>
            <person name="Pain A."/>
            <person name="Lu M."/>
            <person name="Harper D."/>
            <person name="Lindsay R."/>
            <person name="Hauser H."/>
            <person name="James K.D."/>
            <person name="Quiles M."/>
            <person name="Madan Babu M."/>
            <person name="Saito T."/>
            <person name="Buchrieser C."/>
            <person name="Wardroper A."/>
            <person name="Felder M."/>
            <person name="Thangavelu M."/>
            <person name="Johnson D."/>
            <person name="Knights A."/>
            <person name="Loulseged H."/>
            <person name="Mungall K.L."/>
            <person name="Oliver K."/>
            <person name="Price C."/>
            <person name="Quail M.A."/>
            <person name="Urushihara H."/>
            <person name="Hernandez J."/>
            <person name="Rabbinowitsch E."/>
            <person name="Steffen D."/>
            <person name="Sanders M."/>
            <person name="Ma J."/>
            <person name="Kohara Y."/>
            <person name="Sharp S."/>
            <person name="Simmonds M.N."/>
            <person name="Spiegler S."/>
            <person name="Tivey A."/>
            <person name="Sugano S."/>
            <person name="White B."/>
            <person name="Walker D."/>
            <person name="Woodward J.R."/>
            <person name="Winckler T."/>
            <person name="Tanaka Y."/>
            <person name="Shaulsky G."/>
            <person name="Schleicher M."/>
            <person name="Weinstock G.M."/>
            <person name="Rosenthal A."/>
            <person name="Cox E.C."/>
            <person name="Chisholm R.L."/>
            <person name="Gibbs R.A."/>
            <person name="Loomis W.F."/>
            <person name="Platzer M."/>
            <person name="Kay R.R."/>
            <person name="Williams J.G."/>
            <person name="Dear P.H."/>
            <person name="Noegel A.A."/>
            <person name="Barrell B.G."/>
            <person name="Kuspa A."/>
        </authorList>
    </citation>
    <scope>NUCLEOTIDE SEQUENCE [LARGE SCALE GENOMIC DNA]</scope>
    <source>
        <strain>AX4</strain>
    </source>
</reference>
<organism>
    <name type="scientific">Dictyostelium discoideum</name>
    <name type="common">Social amoeba</name>
    <dbReference type="NCBI Taxonomy" id="44689"/>
    <lineage>
        <taxon>Eukaryota</taxon>
        <taxon>Amoebozoa</taxon>
        <taxon>Evosea</taxon>
        <taxon>Eumycetozoa</taxon>
        <taxon>Dictyostelia</taxon>
        <taxon>Dictyosteliales</taxon>
        <taxon>Dictyosteliaceae</taxon>
        <taxon>Dictyostelium</taxon>
    </lineage>
</organism>
<dbReference type="EC" id="3.2.1.17"/>
<dbReference type="EMBL" id="AAFI02000012">
    <property type="protein sequence ID" value="EAL69983.1"/>
    <property type="molecule type" value="Genomic_DNA"/>
</dbReference>
<dbReference type="RefSeq" id="XP_644284.1">
    <property type="nucleotide sequence ID" value="XM_639192.1"/>
</dbReference>
<dbReference type="SMR" id="Q86KC1"/>
<dbReference type="FunCoup" id="Q86KC1">
    <property type="interactions" value="2"/>
</dbReference>
<dbReference type="STRING" id="44689.Q86KC1"/>
<dbReference type="PaxDb" id="44689-DDB0252580"/>
<dbReference type="EnsemblProtists" id="EAL69983">
    <property type="protein sequence ID" value="EAL69983"/>
    <property type="gene ID" value="DDB_G0274181"/>
</dbReference>
<dbReference type="GeneID" id="8619712"/>
<dbReference type="KEGG" id="ddi:DDB_G0274181"/>
<dbReference type="dictyBase" id="DDB_G0274181">
    <property type="gene designation" value="lyEh1"/>
</dbReference>
<dbReference type="VEuPathDB" id="AmoebaDB:DDB_G0274181"/>
<dbReference type="eggNOG" id="ENOG502S1SN">
    <property type="taxonomic scope" value="Eukaryota"/>
</dbReference>
<dbReference type="HOGENOM" id="CLU_073372_3_0_1"/>
<dbReference type="InParanoid" id="Q86KC1"/>
<dbReference type="OMA" id="DIETYQW"/>
<dbReference type="PhylomeDB" id="Q86KC1"/>
<dbReference type="PRO" id="PR:Q86KC1"/>
<dbReference type="Proteomes" id="UP000002195">
    <property type="component" value="Chromosome 2"/>
</dbReference>
<dbReference type="GO" id="GO:0005576">
    <property type="term" value="C:extracellular region"/>
    <property type="evidence" value="ECO:0007669"/>
    <property type="project" value="UniProtKB-SubCell"/>
</dbReference>
<dbReference type="GO" id="GO:0003796">
    <property type="term" value="F:lysozyme activity"/>
    <property type="evidence" value="ECO:0007669"/>
    <property type="project" value="UniProtKB-EC"/>
</dbReference>
<dbReference type="GO" id="GO:0016998">
    <property type="term" value="P:cell wall macromolecule catabolic process"/>
    <property type="evidence" value="ECO:0007669"/>
    <property type="project" value="InterPro"/>
</dbReference>
<dbReference type="GO" id="GO:0042742">
    <property type="term" value="P:defense response to bacterium"/>
    <property type="evidence" value="ECO:0007669"/>
    <property type="project" value="UniProtKB-KW"/>
</dbReference>
<dbReference type="GO" id="GO:0031640">
    <property type="term" value="P:killing of cells of another organism"/>
    <property type="evidence" value="ECO:0007669"/>
    <property type="project" value="UniProtKB-KW"/>
</dbReference>
<dbReference type="GO" id="GO:0009253">
    <property type="term" value="P:peptidoglycan catabolic process"/>
    <property type="evidence" value="ECO:0007669"/>
    <property type="project" value="InterPro"/>
</dbReference>
<dbReference type="GO" id="GO:0007165">
    <property type="term" value="P:signal transduction"/>
    <property type="evidence" value="ECO:0000318"/>
    <property type="project" value="GO_Central"/>
</dbReference>
<dbReference type="CDD" id="cd06416">
    <property type="entry name" value="GH25_Lys1-like"/>
    <property type="match status" value="1"/>
</dbReference>
<dbReference type="FunFam" id="3.20.20.80:FF:000101">
    <property type="entry name" value="Lysozyme, putative"/>
    <property type="match status" value="1"/>
</dbReference>
<dbReference type="Gene3D" id="3.20.20.80">
    <property type="entry name" value="Glycosidases"/>
    <property type="match status" value="1"/>
</dbReference>
<dbReference type="InterPro" id="IPR051595">
    <property type="entry name" value="GH25_Enzymes"/>
</dbReference>
<dbReference type="InterPro" id="IPR002053">
    <property type="entry name" value="Glyco_hydro_25"/>
</dbReference>
<dbReference type="InterPro" id="IPR017853">
    <property type="entry name" value="Glycoside_hydrolase_SF"/>
</dbReference>
<dbReference type="PANTHER" id="PTHR23208">
    <property type="entry name" value="LYSOZYME PROTEIN"/>
    <property type="match status" value="1"/>
</dbReference>
<dbReference type="PANTHER" id="PTHR23208:SF36">
    <property type="entry name" value="LYSOZYME-RELATED"/>
    <property type="match status" value="1"/>
</dbReference>
<dbReference type="Pfam" id="PF01183">
    <property type="entry name" value="Glyco_hydro_25"/>
    <property type="match status" value="1"/>
</dbReference>
<dbReference type="SUPFAM" id="SSF51445">
    <property type="entry name" value="(Trans)glycosidases"/>
    <property type="match status" value="1"/>
</dbReference>
<dbReference type="PROSITE" id="PS51904">
    <property type="entry name" value="GLYCOSYL_HYDROL_F25_2"/>
    <property type="match status" value="1"/>
</dbReference>
<feature type="signal peptide" evidence="1">
    <location>
        <begin position="1"/>
        <end position="19"/>
    </location>
</feature>
<feature type="chain" id="PRO_0000330648" description="Probable GH family 25 lysozyme 2">
    <location>
        <begin position="20"/>
        <end position="212"/>
    </location>
</feature>
<feature type="domain" description="Ch-type lysozyme" evidence="2">
    <location>
        <begin position="20"/>
        <end position="212"/>
    </location>
</feature>
<feature type="active site" evidence="2">
    <location>
        <position position="24"/>
    </location>
</feature>
<feature type="active site" evidence="2">
    <location>
        <position position="112"/>
    </location>
</feature>
<feature type="active site" evidence="2">
    <location>
        <position position="114"/>
    </location>
</feature>
<comment type="catalytic activity">
    <reaction>
        <text>Hydrolysis of (1-&gt;4)-beta-linkages between N-acetylmuramic acid and N-acetyl-D-glucosamine residues in a peptidoglycan and between N-acetyl-D-glucosamine residues in chitodextrins.</text>
        <dbReference type="EC" id="3.2.1.17"/>
    </reaction>
</comment>
<comment type="subcellular location">
    <subcellularLocation>
        <location evidence="3">Secreted</location>
    </subcellularLocation>
</comment>
<comment type="similarity">
    <text evidence="2 3">Belongs to the glycosyl hydrolase 25 family.</text>
</comment>
<sequence>MRFIALLISFFALLKVISAISGVDISSASTIESFTCLKSAGYDFAIIRAYESLGQVDPNGPHSVYNARDAGIEYVDVYMFPCPTCGNGAGQAETMVNYLKGYNANYGMVWLDIEGPQYWMSQSENVAFFESLVAGLKAEGAHIGVYTSASQWEPIMGGYTGGSEFPLWYAHYDGNPSFSDFSPFNGWSTPSVKQYDDTGDSCGLGFDLNWYP</sequence>
<proteinExistence type="inferred from homology"/>
<gene>
    <name type="ORF">DDB_G0274181</name>
</gene>
<evidence type="ECO:0000255" key="1"/>
<evidence type="ECO:0000255" key="2">
    <source>
        <dbReference type="PROSITE-ProRule" id="PRU01252"/>
    </source>
</evidence>
<evidence type="ECO:0000305" key="3"/>
<protein>
    <recommendedName>
        <fullName>Probable GH family 25 lysozyme 2</fullName>
        <ecNumber>3.2.1.17</ecNumber>
    </recommendedName>
    <alternativeName>
        <fullName>1,4-beta-N-acetylmuramidase 2</fullName>
    </alternativeName>
</protein>
<accession>Q86KC1</accession>
<accession>Q554N9</accession>
<name>LYSG2_DICDI</name>